<sequence>MEEKPGQPQPQHHHSHHHPHHHPQQQQQQQSHHHHHYYFYNHSHNHHHHHHHQQPHQYLQHGAEGSPKAQPKPLKHEQKHTLQQHQETPKKKTGYGEINGNAGEREISLKSLSSDEATNPISRVLNGNQQVVETSLKQTVKTSTFGKAGIKTKNFIQKNSMDKKNGKSYENKSGETQAVDKTDTIAIPNGVITSSSGYITNGYMSKGADNDGSGSESGYTTPKKRKARRNSAKGCENLNLVQDKIMQETSVPALKQGLETLKPDYSEQKGMRVDGSKPIWKYETGPGGTSRGKPAMGDVLRKSSDIKPGLSSKKFDDRPKGKHASAAASKEDSWTLFKPPPVFPVDNSSAKIVPKISYASKVKENLNKTVQNSSVSPSSSSSSSSTGETQTQSSSRLSQVPMSALKSVTSASFSNGPVLAGTDGSVYPSGGQPLLTTAANTLTPISTGTDSVLQDMSLASAAVEQIKSSLFIYPSNMQTVLLSAQVDLPSQTDQQNLGDIFQNQWGLSFINEPSAGPETVIGKSSDHKVMEVTFQGEYPATLVSQGAEIIPSGTEHPVFPKAYELEKRTSPQVLGHILKPGTTESGALSLDPSHIGDLQKADTSSQGALVFLSKDYEIENQNPLASPTNTLLGSAKEQRYQRGLERNDSWGSFDLRAAIVYHTKEMESIWNLQKQDPKRIITYNEAMDSPDQ</sequence>
<name>NUFP2_MOUSE</name>
<keyword id="KW-0025">Alternative splicing</keyword>
<keyword id="KW-0963">Cytoplasm</keyword>
<keyword id="KW-1017">Isopeptide bond</keyword>
<keyword id="KW-0488">Methylation</keyword>
<keyword id="KW-0539">Nucleus</keyword>
<keyword id="KW-0597">Phosphoprotein</keyword>
<keyword id="KW-1185">Reference proteome</keyword>
<keyword id="KW-0832">Ubl conjugation</keyword>
<reference key="1">
    <citation type="journal article" date="2003" name="DNA Res.">
        <title>Prediction of the coding sequences of mouse homologues of KIAA gene: II. The complete nucleotide sequences of 400 mouse KIAA-homologous cDNAs identified by screening of terminal sequences of cDNA clones randomly sampled from size-fractionated libraries.</title>
        <authorList>
            <person name="Okazaki N."/>
            <person name="Kikuno R."/>
            <person name="Ohara R."/>
            <person name="Inamoto S."/>
            <person name="Aizawa H."/>
            <person name="Yuasa S."/>
            <person name="Nakajima D."/>
            <person name="Nagase T."/>
            <person name="Ohara O."/>
            <person name="Koga H."/>
        </authorList>
    </citation>
    <scope>NUCLEOTIDE SEQUENCE [LARGE SCALE MRNA] (ISOFORM 1)</scope>
    <source>
        <tissue>Brain</tissue>
    </source>
</reference>
<reference key="2">
    <citation type="journal article" date="2005" name="Science">
        <title>The transcriptional landscape of the mammalian genome.</title>
        <authorList>
            <person name="Carninci P."/>
            <person name="Kasukawa T."/>
            <person name="Katayama S."/>
            <person name="Gough J."/>
            <person name="Frith M.C."/>
            <person name="Maeda N."/>
            <person name="Oyama R."/>
            <person name="Ravasi T."/>
            <person name="Lenhard B."/>
            <person name="Wells C."/>
            <person name="Kodzius R."/>
            <person name="Shimokawa K."/>
            <person name="Bajic V.B."/>
            <person name="Brenner S.E."/>
            <person name="Batalov S."/>
            <person name="Forrest A.R."/>
            <person name="Zavolan M."/>
            <person name="Davis M.J."/>
            <person name="Wilming L.G."/>
            <person name="Aidinis V."/>
            <person name="Allen J.E."/>
            <person name="Ambesi-Impiombato A."/>
            <person name="Apweiler R."/>
            <person name="Aturaliya R.N."/>
            <person name="Bailey T.L."/>
            <person name="Bansal M."/>
            <person name="Baxter L."/>
            <person name="Beisel K.W."/>
            <person name="Bersano T."/>
            <person name="Bono H."/>
            <person name="Chalk A.M."/>
            <person name="Chiu K.P."/>
            <person name="Choudhary V."/>
            <person name="Christoffels A."/>
            <person name="Clutterbuck D.R."/>
            <person name="Crowe M.L."/>
            <person name="Dalla E."/>
            <person name="Dalrymple B.P."/>
            <person name="de Bono B."/>
            <person name="Della Gatta G."/>
            <person name="di Bernardo D."/>
            <person name="Down T."/>
            <person name="Engstrom P."/>
            <person name="Fagiolini M."/>
            <person name="Faulkner G."/>
            <person name="Fletcher C.F."/>
            <person name="Fukushima T."/>
            <person name="Furuno M."/>
            <person name="Futaki S."/>
            <person name="Gariboldi M."/>
            <person name="Georgii-Hemming P."/>
            <person name="Gingeras T.R."/>
            <person name="Gojobori T."/>
            <person name="Green R.E."/>
            <person name="Gustincich S."/>
            <person name="Harbers M."/>
            <person name="Hayashi Y."/>
            <person name="Hensch T.K."/>
            <person name="Hirokawa N."/>
            <person name="Hill D."/>
            <person name="Huminiecki L."/>
            <person name="Iacono M."/>
            <person name="Ikeo K."/>
            <person name="Iwama A."/>
            <person name="Ishikawa T."/>
            <person name="Jakt M."/>
            <person name="Kanapin A."/>
            <person name="Katoh M."/>
            <person name="Kawasawa Y."/>
            <person name="Kelso J."/>
            <person name="Kitamura H."/>
            <person name="Kitano H."/>
            <person name="Kollias G."/>
            <person name="Krishnan S.P."/>
            <person name="Kruger A."/>
            <person name="Kummerfeld S.K."/>
            <person name="Kurochkin I.V."/>
            <person name="Lareau L.F."/>
            <person name="Lazarevic D."/>
            <person name="Lipovich L."/>
            <person name="Liu J."/>
            <person name="Liuni S."/>
            <person name="McWilliam S."/>
            <person name="Madan Babu M."/>
            <person name="Madera M."/>
            <person name="Marchionni L."/>
            <person name="Matsuda H."/>
            <person name="Matsuzawa S."/>
            <person name="Miki H."/>
            <person name="Mignone F."/>
            <person name="Miyake S."/>
            <person name="Morris K."/>
            <person name="Mottagui-Tabar S."/>
            <person name="Mulder N."/>
            <person name="Nakano N."/>
            <person name="Nakauchi H."/>
            <person name="Ng P."/>
            <person name="Nilsson R."/>
            <person name="Nishiguchi S."/>
            <person name="Nishikawa S."/>
            <person name="Nori F."/>
            <person name="Ohara O."/>
            <person name="Okazaki Y."/>
            <person name="Orlando V."/>
            <person name="Pang K.C."/>
            <person name="Pavan W.J."/>
            <person name="Pavesi G."/>
            <person name="Pesole G."/>
            <person name="Petrovsky N."/>
            <person name="Piazza S."/>
            <person name="Reed J."/>
            <person name="Reid J.F."/>
            <person name="Ring B.Z."/>
            <person name="Ringwald M."/>
            <person name="Rost B."/>
            <person name="Ruan Y."/>
            <person name="Salzberg S.L."/>
            <person name="Sandelin A."/>
            <person name="Schneider C."/>
            <person name="Schoenbach C."/>
            <person name="Sekiguchi K."/>
            <person name="Semple C.A."/>
            <person name="Seno S."/>
            <person name="Sessa L."/>
            <person name="Sheng Y."/>
            <person name="Shibata Y."/>
            <person name="Shimada H."/>
            <person name="Shimada K."/>
            <person name="Silva D."/>
            <person name="Sinclair B."/>
            <person name="Sperling S."/>
            <person name="Stupka E."/>
            <person name="Sugiura K."/>
            <person name="Sultana R."/>
            <person name="Takenaka Y."/>
            <person name="Taki K."/>
            <person name="Tammoja K."/>
            <person name="Tan S.L."/>
            <person name="Tang S."/>
            <person name="Taylor M.S."/>
            <person name="Tegner J."/>
            <person name="Teichmann S.A."/>
            <person name="Ueda H.R."/>
            <person name="van Nimwegen E."/>
            <person name="Verardo R."/>
            <person name="Wei C.L."/>
            <person name="Yagi K."/>
            <person name="Yamanishi H."/>
            <person name="Zabarovsky E."/>
            <person name="Zhu S."/>
            <person name="Zimmer A."/>
            <person name="Hide W."/>
            <person name="Bult C."/>
            <person name="Grimmond S.M."/>
            <person name="Teasdale R.D."/>
            <person name="Liu E.T."/>
            <person name="Brusic V."/>
            <person name="Quackenbush J."/>
            <person name="Wahlestedt C."/>
            <person name="Mattick J.S."/>
            <person name="Hume D.A."/>
            <person name="Kai C."/>
            <person name="Sasaki D."/>
            <person name="Tomaru Y."/>
            <person name="Fukuda S."/>
            <person name="Kanamori-Katayama M."/>
            <person name="Suzuki M."/>
            <person name="Aoki J."/>
            <person name="Arakawa T."/>
            <person name="Iida J."/>
            <person name="Imamura K."/>
            <person name="Itoh M."/>
            <person name="Kato T."/>
            <person name="Kawaji H."/>
            <person name="Kawagashira N."/>
            <person name="Kawashima T."/>
            <person name="Kojima M."/>
            <person name="Kondo S."/>
            <person name="Konno H."/>
            <person name="Nakano K."/>
            <person name="Ninomiya N."/>
            <person name="Nishio T."/>
            <person name="Okada M."/>
            <person name="Plessy C."/>
            <person name="Shibata K."/>
            <person name="Shiraki T."/>
            <person name="Suzuki S."/>
            <person name="Tagami M."/>
            <person name="Waki K."/>
            <person name="Watahiki A."/>
            <person name="Okamura-Oho Y."/>
            <person name="Suzuki H."/>
            <person name="Kawai J."/>
            <person name="Hayashizaki Y."/>
        </authorList>
    </citation>
    <scope>NUCLEOTIDE SEQUENCE [LARGE SCALE MRNA] (ISOFORMS 1 AND 2)</scope>
    <source>
        <strain>C57BL/6J</strain>
        <strain>NOD</strain>
        <tissue>Bone marrow</tissue>
        <tissue>Dendritic cell</tissue>
        <tissue>Embryo</tissue>
        <tissue>Head</tissue>
    </source>
</reference>
<reference key="3">
    <citation type="journal article" date="2009" name="PLoS Biol.">
        <title>Lineage-specific biology revealed by a finished genome assembly of the mouse.</title>
        <authorList>
            <person name="Church D.M."/>
            <person name="Goodstadt L."/>
            <person name="Hillier L.W."/>
            <person name="Zody M.C."/>
            <person name="Goldstein S."/>
            <person name="She X."/>
            <person name="Bult C.J."/>
            <person name="Agarwala R."/>
            <person name="Cherry J.L."/>
            <person name="DiCuccio M."/>
            <person name="Hlavina W."/>
            <person name="Kapustin Y."/>
            <person name="Meric P."/>
            <person name="Maglott D."/>
            <person name="Birtle Z."/>
            <person name="Marques A.C."/>
            <person name="Graves T."/>
            <person name="Zhou S."/>
            <person name="Teague B."/>
            <person name="Potamousis K."/>
            <person name="Churas C."/>
            <person name="Place M."/>
            <person name="Herschleb J."/>
            <person name="Runnheim R."/>
            <person name="Forrest D."/>
            <person name="Amos-Landgraf J."/>
            <person name="Schwartz D.C."/>
            <person name="Cheng Z."/>
            <person name="Lindblad-Toh K."/>
            <person name="Eichler E.E."/>
            <person name="Ponting C.P."/>
        </authorList>
    </citation>
    <scope>NUCLEOTIDE SEQUENCE [LARGE SCALE GENOMIC DNA]</scope>
    <source>
        <strain>C57BL/6J</strain>
    </source>
</reference>
<reference key="4">
    <citation type="journal article" date="2003" name="Hum. Mol. Genet.">
        <title>82-FIP, a novel FMRP (fragile X mental retardation protein) interacting protein, shows a cell cycle-dependent intracellular localization.</title>
        <authorList>
            <person name="Bardoni B."/>
            <person name="Castets M."/>
            <person name="Huot M.-E."/>
            <person name="Schenck A."/>
            <person name="Adinolfi S."/>
            <person name="Corbin F."/>
            <person name="Pastore A."/>
            <person name="Khandjian E.W."/>
            <person name="Mandel J.-L."/>
        </authorList>
    </citation>
    <scope>SUBCELLULAR LOCATION</scope>
    <scope>INTERACTION WITH FMR1</scope>
</reference>
<reference key="5">
    <citation type="journal article" date="2004" name="Mol. Cell. Proteomics">
        <title>Phosphoproteomic analysis of the developing mouse brain.</title>
        <authorList>
            <person name="Ballif B.A."/>
            <person name="Villen J."/>
            <person name="Beausoleil S.A."/>
            <person name="Schwartz D."/>
            <person name="Gygi S.P."/>
        </authorList>
    </citation>
    <scope>IDENTIFICATION BY MASS SPECTROMETRY [LARGE SCALE ANALYSIS]</scope>
    <source>
        <tissue>Embryonic brain</tissue>
    </source>
</reference>
<reference key="6">
    <citation type="journal article" date="2007" name="Mol. Cell. Proteomics">
        <title>Qualitative and quantitative analyses of protein phosphorylation in naive and stimulated mouse synaptosomal preparations.</title>
        <authorList>
            <person name="Munton R.P."/>
            <person name="Tweedie-Cullen R."/>
            <person name="Livingstone-Zatchej M."/>
            <person name="Weinandy F."/>
            <person name="Waidelich M."/>
            <person name="Longo D."/>
            <person name="Gehrig P."/>
            <person name="Potthast F."/>
            <person name="Rutishauser D."/>
            <person name="Gerrits B."/>
            <person name="Panse C."/>
            <person name="Schlapbach R."/>
            <person name="Mansuy I.M."/>
        </authorList>
    </citation>
    <scope>IDENTIFICATION BY MASS SPECTROMETRY [LARGE SCALE ANALYSIS]</scope>
    <source>
        <tissue>Brain cortex</tissue>
    </source>
</reference>
<reference key="7">
    <citation type="journal article" date="2007" name="Proc. Natl. Acad. Sci. U.S.A.">
        <title>Large-scale phosphorylation analysis of mouse liver.</title>
        <authorList>
            <person name="Villen J."/>
            <person name="Beausoleil S.A."/>
            <person name="Gerber S.A."/>
            <person name="Gygi S.P."/>
        </authorList>
    </citation>
    <scope>PHOSPHORYLATION [LARGE SCALE ANALYSIS] AT SER-213; SER-215 AND SER-649</scope>
    <scope>IDENTIFICATION BY MASS SPECTROMETRY [LARGE SCALE ANALYSIS]</scope>
    <source>
        <tissue>Liver</tissue>
    </source>
</reference>
<reference key="8">
    <citation type="journal article" date="2009" name="Immunity">
        <title>The phagosomal proteome in interferon-gamma-activated macrophages.</title>
        <authorList>
            <person name="Trost M."/>
            <person name="English L."/>
            <person name="Lemieux S."/>
            <person name="Courcelles M."/>
            <person name="Desjardins M."/>
            <person name="Thibault P."/>
        </authorList>
    </citation>
    <scope>PHOSPHORYLATION [LARGE SCALE ANALYSIS] AT SER-649</scope>
    <scope>IDENTIFICATION BY MASS SPECTROMETRY [LARGE SCALE ANALYSIS]</scope>
</reference>
<reference key="9">
    <citation type="journal article" date="2009" name="Mol. Cell. Proteomics">
        <title>Large scale localization of protein phosphorylation by use of electron capture dissociation mass spectrometry.</title>
        <authorList>
            <person name="Sweet S.M."/>
            <person name="Bailey C.M."/>
            <person name="Cunningham D.L."/>
            <person name="Heath J.K."/>
            <person name="Cooper H.J."/>
        </authorList>
    </citation>
    <scope>PHOSPHORYLATION [LARGE SCALE ANALYSIS] AT SER-649</scope>
    <scope>IDENTIFICATION BY MASS SPECTROMETRY [LARGE SCALE ANALYSIS]</scope>
    <source>
        <tissue>Embryonic fibroblast</tissue>
    </source>
</reference>
<reference key="10">
    <citation type="journal article" date="2010" name="Cell">
        <title>A tissue-specific atlas of mouse protein phosphorylation and expression.</title>
        <authorList>
            <person name="Huttlin E.L."/>
            <person name="Jedrychowski M.P."/>
            <person name="Elias J.E."/>
            <person name="Goswami T."/>
            <person name="Rad R."/>
            <person name="Beausoleil S.A."/>
            <person name="Villen J."/>
            <person name="Haas W."/>
            <person name="Sowa M.E."/>
            <person name="Gygi S.P."/>
        </authorList>
    </citation>
    <scope>PHOSPHORYLATION [LARGE SCALE ANALYSIS] AT SER-113; SER-213; SER-215; SER-570; SER-626; SER-649 AND SER-652</scope>
    <scope>IDENTIFICATION BY MASS SPECTROMETRY [LARGE SCALE ANALYSIS]</scope>
    <source>
        <tissue>Brain</tissue>
        <tissue>Brown adipose tissue</tissue>
        <tissue>Heart</tissue>
        <tissue>Kidney</tissue>
        <tissue>Liver</tissue>
        <tissue>Lung</tissue>
        <tissue>Pancreas</tissue>
        <tissue>Spleen</tissue>
        <tissue>Testis</tissue>
    </source>
</reference>
<comment type="function">
    <text evidence="1">Binds RNA.</text>
</comment>
<comment type="subunit">
    <text evidence="1 3">Interacts with FMR1 (via N-terminus) (PubMed:12837692). Interacts with DDX6 (By similarity).</text>
</comment>
<comment type="subcellular location">
    <subcellularLocation>
        <location evidence="3">Nucleus</location>
    </subcellularLocation>
    <subcellularLocation>
        <location evidence="3">Cytoplasm</location>
    </subcellularLocation>
    <subcellularLocation>
        <location evidence="1">Cytoplasm</location>
        <location evidence="1">Stress granule</location>
    </subcellularLocation>
    <text evidence="1 3">Localized in both nucleus and cytoplasm in most neurons. In the cortex, distributed in a diffuse way in the nucleus and in the cytoplasm. Localized in the cytoplasm in neurons of the dentate gyrus in the olfactive bulb, in the ependymal epithelium and in the granular layer of the cerebellum. In Purkinje cells, distributed in both cell compartments and in nuclear dots adjacent to the nucleolus (PubMed:12837692).</text>
</comment>
<comment type="alternative products">
    <event type="alternative splicing"/>
    <isoform>
        <id>Q5F2E7-1</id>
        <name>1</name>
        <sequence type="displayed"/>
    </isoform>
    <isoform>
        <id>Q5F2E7-2</id>
        <name>2</name>
        <sequence type="described" ref="VSP_019729"/>
    </isoform>
</comment>
<comment type="sequence caution" evidence="5">
    <conflict type="erroneous initiation">
        <sequence resource="EMBL-CDS" id="BAC65776"/>
    </conflict>
</comment>
<feature type="chain" id="PRO_0000245522" description="FMR1-interacting protein NUFIP2">
    <location>
        <begin position="1"/>
        <end position="692"/>
    </location>
</feature>
<feature type="region of interest" description="Disordered" evidence="2">
    <location>
        <begin position="1"/>
        <end position="100"/>
    </location>
</feature>
<feature type="region of interest" description="Disordered" evidence="2">
    <location>
        <begin position="205"/>
        <end position="233"/>
    </location>
</feature>
<feature type="region of interest" description="Disordered" evidence="2">
    <location>
        <begin position="277"/>
        <end position="337"/>
    </location>
</feature>
<feature type="region of interest" description="Disordered" evidence="2">
    <location>
        <begin position="369"/>
        <end position="401"/>
    </location>
</feature>
<feature type="compositionally biased region" description="Basic residues" evidence="2">
    <location>
        <begin position="11"/>
        <end position="23"/>
    </location>
</feature>
<feature type="compositionally biased region" description="Basic residues" evidence="2">
    <location>
        <begin position="31"/>
        <end position="54"/>
    </location>
</feature>
<feature type="compositionally biased region" description="Basic residues" evidence="2">
    <location>
        <begin position="222"/>
        <end position="231"/>
    </location>
</feature>
<feature type="compositionally biased region" description="Low complexity" evidence="2">
    <location>
        <begin position="371"/>
        <end position="395"/>
    </location>
</feature>
<feature type="modified residue" description="Phosphothreonine" evidence="1">
    <location>
        <position position="88"/>
    </location>
</feature>
<feature type="modified residue" description="Phosphoserine" evidence="10">
    <location>
        <position position="113"/>
    </location>
</feature>
<feature type="modified residue" description="Phosphoserine" evidence="1">
    <location>
        <position position="114"/>
    </location>
</feature>
<feature type="modified residue" description="Phosphoserine" evidence="7 10">
    <location>
        <position position="213"/>
    </location>
</feature>
<feature type="modified residue" description="Phosphoserine" evidence="7 10">
    <location>
        <position position="215"/>
    </location>
</feature>
<feature type="modified residue" description="Phosphotyrosine" evidence="1">
    <location>
        <position position="219"/>
    </location>
</feature>
<feature type="modified residue" description="Phosphothreonine" evidence="1">
    <location>
        <position position="220"/>
    </location>
</feature>
<feature type="modified residue" description="Phosphothreonine" evidence="1">
    <location>
        <position position="221"/>
    </location>
</feature>
<feature type="modified residue" description="Omega-N-methylarginine" evidence="1">
    <location>
        <position position="291"/>
    </location>
</feature>
<feature type="modified residue" description="Phosphoserine" evidence="1">
    <location>
        <position position="304"/>
    </location>
</feature>
<feature type="modified residue" description="Phosphoserine" evidence="1">
    <location>
        <position position="376"/>
    </location>
</feature>
<feature type="modified residue" description="Phosphothreonine" evidence="1">
    <location>
        <position position="569"/>
    </location>
</feature>
<feature type="modified residue" description="Phosphoserine" evidence="10">
    <location>
        <position position="570"/>
    </location>
</feature>
<feature type="modified residue" description="Phosphoserine" evidence="1">
    <location>
        <position position="589"/>
    </location>
</feature>
<feature type="modified residue" description="Phosphoserine" evidence="1">
    <location>
        <position position="605"/>
    </location>
</feature>
<feature type="modified residue" description="Phosphoserine" evidence="10">
    <location>
        <position position="626"/>
    </location>
</feature>
<feature type="modified residue" description="Phosphothreonine" evidence="1">
    <location>
        <position position="630"/>
    </location>
</feature>
<feature type="modified residue" description="Phosphoserine" evidence="1">
    <location>
        <position position="634"/>
    </location>
</feature>
<feature type="modified residue" description="Phosphoserine" evidence="7 8 9 10">
    <location>
        <position position="649"/>
    </location>
</feature>
<feature type="modified residue" description="Phosphoserine" evidence="10">
    <location>
        <position position="652"/>
    </location>
</feature>
<feature type="modified residue" description="Phosphoserine" evidence="1">
    <location>
        <position position="689"/>
    </location>
</feature>
<feature type="cross-link" description="Glycyl lysine isopeptide (Lys-Gly) (interchain with G-Cter in SUMO2)" evidence="1">
    <location>
        <position position="79"/>
    </location>
</feature>
<feature type="cross-link" description="Glycyl lysine isopeptide (Lys-Gly) (interchain with G-Cter in SUMO2)" evidence="1">
    <location>
        <position position="110"/>
    </location>
</feature>
<feature type="cross-link" description="Glycyl lysine isopeptide (Lys-Gly) (interchain with G-Cter in SUMO2)" evidence="1">
    <location>
        <position position="137"/>
    </location>
</feature>
<feature type="cross-link" description="Glycyl lysine isopeptide (Lys-Gly) (interchain with G-Cter in SUMO2)" evidence="1">
    <location>
        <position position="147"/>
    </location>
</feature>
<feature type="cross-link" description="Glycyl lysine isopeptide (Lys-Gly) (interchain with G-Cter in SUMO2)" evidence="1">
    <location>
        <position position="158"/>
    </location>
</feature>
<feature type="cross-link" description="Glycyl lysine isopeptide (Lys-Gly) (interchain with G-Cter in SUMO2)" evidence="1">
    <location>
        <position position="172"/>
    </location>
</feature>
<feature type="cross-link" description="Glycyl lysine isopeptide (Lys-Gly) (interchain with G-Cter in SUMO2)" evidence="1">
    <location>
        <position position="262"/>
    </location>
</feature>
<feature type="cross-link" description="Glycyl lysine isopeptide (Lys-Gly) (interchain with G-Cter in SUMO2)" evidence="1">
    <location>
        <position position="281"/>
    </location>
</feature>
<feature type="cross-link" description="Glycyl lysine isopeptide (Lys-Gly) (interchain with G-Cter in SUMO2)" evidence="1">
    <location>
        <position position="293"/>
    </location>
</feature>
<feature type="cross-link" description="Glycyl lysine isopeptide (Lys-Gly) (interchain with G-Cter in SUMO2)" evidence="1">
    <location>
        <position position="307"/>
    </location>
</feature>
<feature type="splice variant" id="VSP_019729" description="In isoform 2." evidence="4">
    <original>DPKRIITYNEAMDSPDQ</original>
    <variation>VFCLCVYMYTYVHHVMSLHGRERTLDPLELALHWS</variation>
    <location>
        <begin position="676"/>
        <end position="692"/>
    </location>
</feature>
<feature type="sequence conflict" description="In Ref. 2; BAE42015." evidence="5" ref="2">
    <location>
        <position position="52"/>
    </location>
</feature>
<feature type="sequence conflict" description="In Ref. 2; BAE42015." evidence="5" ref="2">
    <original>Q</original>
    <variation>R</variation>
    <location>
        <position position="57"/>
    </location>
</feature>
<proteinExistence type="evidence at protein level"/>
<gene>
    <name type="primary">Nufip2</name>
    <name type="synonym">Kiaa1321</name>
</gene>
<dbReference type="EMBL" id="AK122494">
    <property type="protein sequence ID" value="BAC65776.1"/>
    <property type="status" value="ALT_INIT"/>
    <property type="molecule type" value="mRNA"/>
</dbReference>
<dbReference type="EMBL" id="AK132603">
    <property type="protein sequence ID" value="BAE21256.1"/>
    <property type="molecule type" value="mRNA"/>
</dbReference>
<dbReference type="EMBL" id="AK152336">
    <property type="protein sequence ID" value="BAE31134.1"/>
    <property type="molecule type" value="mRNA"/>
</dbReference>
<dbReference type="EMBL" id="AK160601">
    <property type="protein sequence ID" value="BAE35905.1"/>
    <property type="molecule type" value="mRNA"/>
</dbReference>
<dbReference type="EMBL" id="AK170764">
    <property type="protein sequence ID" value="BAE42015.1"/>
    <property type="molecule type" value="mRNA"/>
</dbReference>
<dbReference type="EMBL" id="AL591136">
    <property type="status" value="NOT_ANNOTATED_CDS"/>
    <property type="molecule type" value="Genomic_DNA"/>
</dbReference>
<dbReference type="CCDS" id="CCDS25083.1">
    <molecule id="Q5F2E7-1"/>
</dbReference>
<dbReference type="RefSeq" id="NP_001019376.1">
    <molecule id="Q5F2E7-1"/>
    <property type="nucleotide sequence ID" value="NM_001024205.2"/>
</dbReference>
<dbReference type="RefSeq" id="XP_006534125.1">
    <molecule id="Q5F2E7-1"/>
    <property type="nucleotide sequence ID" value="XM_006534062.5"/>
</dbReference>
<dbReference type="BioGRID" id="212929">
    <property type="interactions" value="37"/>
</dbReference>
<dbReference type="FunCoup" id="Q5F2E7">
    <property type="interactions" value="4348"/>
</dbReference>
<dbReference type="IntAct" id="Q5F2E7">
    <property type="interactions" value="4"/>
</dbReference>
<dbReference type="MINT" id="Q5F2E7"/>
<dbReference type="STRING" id="10090.ENSMUSP00000098365"/>
<dbReference type="GlyGen" id="Q5F2E7">
    <property type="glycosylation" value="6 sites, 1 N-linked glycan (1 site), 1 O-linked glycan (5 sites)"/>
</dbReference>
<dbReference type="iPTMnet" id="Q5F2E7"/>
<dbReference type="PhosphoSitePlus" id="Q5F2E7"/>
<dbReference type="jPOST" id="Q5F2E7"/>
<dbReference type="PaxDb" id="10090-ENSMUSP00000098365"/>
<dbReference type="PeptideAtlas" id="Q5F2E7"/>
<dbReference type="ProteomicsDB" id="287855">
    <molecule id="Q5F2E7-1"/>
</dbReference>
<dbReference type="ProteomicsDB" id="287856">
    <molecule id="Q5F2E7-2"/>
</dbReference>
<dbReference type="Pumba" id="Q5F2E7"/>
<dbReference type="Antibodypedia" id="2837">
    <property type="antibodies" value="92 antibodies from 23 providers"/>
</dbReference>
<dbReference type="DNASU" id="68564"/>
<dbReference type="Ensembl" id="ENSMUST00000100802.11">
    <molecule id="Q5F2E7-1"/>
    <property type="protein sequence ID" value="ENSMUSP00000098365.5"/>
    <property type="gene ID" value="ENSMUSG00000037857.17"/>
</dbReference>
<dbReference type="Ensembl" id="ENSMUST00000181023.2">
    <molecule id="Q5F2E7-2"/>
    <property type="protein sequence ID" value="ENSMUSP00000137922.2"/>
    <property type="gene ID" value="ENSMUSG00000037857.17"/>
</dbReference>
<dbReference type="GeneID" id="68564"/>
<dbReference type="KEGG" id="mmu:68564"/>
<dbReference type="UCSC" id="uc007khd.2">
    <molecule id="Q5F2E7-1"/>
    <property type="organism name" value="mouse"/>
</dbReference>
<dbReference type="AGR" id="MGI:1915814"/>
<dbReference type="CTD" id="57532"/>
<dbReference type="MGI" id="MGI:1915814">
    <property type="gene designation" value="Nufip2"/>
</dbReference>
<dbReference type="VEuPathDB" id="HostDB:ENSMUSG00000037857"/>
<dbReference type="eggNOG" id="ENOG502QPMD">
    <property type="taxonomic scope" value="Eukaryota"/>
</dbReference>
<dbReference type="GeneTree" id="ENSGT00440000038328"/>
<dbReference type="HOGENOM" id="CLU_020745_0_0_1"/>
<dbReference type="InParanoid" id="Q5F2E7"/>
<dbReference type="OMA" id="NEQKGNR"/>
<dbReference type="PhylomeDB" id="Q5F2E7"/>
<dbReference type="TreeFam" id="TF332832"/>
<dbReference type="BioGRID-ORCS" id="68564">
    <property type="hits" value="7 hits in 77 CRISPR screens"/>
</dbReference>
<dbReference type="ChiTaRS" id="Nufip2">
    <property type="organism name" value="mouse"/>
</dbReference>
<dbReference type="PRO" id="PR:Q5F2E7"/>
<dbReference type="Proteomes" id="UP000000589">
    <property type="component" value="Chromosome 11"/>
</dbReference>
<dbReference type="RNAct" id="Q5F2E7">
    <property type="molecule type" value="protein"/>
</dbReference>
<dbReference type="Bgee" id="ENSMUSG00000037857">
    <property type="expression patterns" value="Expressed in manus and 221 other cell types or tissues"/>
</dbReference>
<dbReference type="GO" id="GO:0005737">
    <property type="term" value="C:cytoplasm"/>
    <property type="evidence" value="ECO:0000250"/>
    <property type="project" value="HGNC"/>
</dbReference>
<dbReference type="GO" id="GO:0010494">
    <property type="term" value="C:cytoplasmic stress granule"/>
    <property type="evidence" value="ECO:0007669"/>
    <property type="project" value="UniProtKB-SubCell"/>
</dbReference>
<dbReference type="GO" id="GO:0005829">
    <property type="term" value="C:cytosol"/>
    <property type="evidence" value="ECO:0007669"/>
    <property type="project" value="Ensembl"/>
</dbReference>
<dbReference type="GO" id="GO:0016604">
    <property type="term" value="C:nuclear body"/>
    <property type="evidence" value="ECO:0007669"/>
    <property type="project" value="Ensembl"/>
</dbReference>
<dbReference type="GO" id="GO:0005634">
    <property type="term" value="C:nucleus"/>
    <property type="evidence" value="ECO:0000250"/>
    <property type="project" value="HGNC"/>
</dbReference>
<dbReference type="GO" id="GO:0005840">
    <property type="term" value="C:ribosome"/>
    <property type="evidence" value="ECO:0000250"/>
    <property type="project" value="HGNC"/>
</dbReference>
<dbReference type="GO" id="GO:0003723">
    <property type="term" value="F:RNA binding"/>
    <property type="evidence" value="ECO:0000250"/>
    <property type="project" value="HGNC"/>
</dbReference>
<dbReference type="InterPro" id="IPR032747">
    <property type="entry name" value="NUFIP2"/>
</dbReference>
<dbReference type="PANTHER" id="PTHR28333:SF2">
    <property type="entry name" value="FMR1-INTERACTING PROTEIN NUFIP2"/>
    <property type="match status" value="1"/>
</dbReference>
<dbReference type="PANTHER" id="PTHR28333">
    <property type="entry name" value="NUCLEAR FRAGILE X MENTAL RETARDATION-INTERACTING PROTEIN 2"/>
    <property type="match status" value="1"/>
</dbReference>
<dbReference type="Pfam" id="PF15293">
    <property type="entry name" value="NUFIP2"/>
    <property type="match status" value="1"/>
</dbReference>
<evidence type="ECO:0000250" key="1">
    <source>
        <dbReference type="UniProtKB" id="Q7Z417"/>
    </source>
</evidence>
<evidence type="ECO:0000256" key="2">
    <source>
        <dbReference type="SAM" id="MobiDB-lite"/>
    </source>
</evidence>
<evidence type="ECO:0000269" key="3">
    <source>
    </source>
</evidence>
<evidence type="ECO:0000303" key="4">
    <source>
    </source>
</evidence>
<evidence type="ECO:0000305" key="5"/>
<evidence type="ECO:0000305" key="6">
    <source>
    </source>
</evidence>
<evidence type="ECO:0007744" key="7">
    <source>
    </source>
</evidence>
<evidence type="ECO:0007744" key="8">
    <source>
    </source>
</evidence>
<evidence type="ECO:0007744" key="9">
    <source>
    </source>
</evidence>
<evidence type="ECO:0007744" key="10">
    <source>
    </source>
</evidence>
<organism>
    <name type="scientific">Mus musculus</name>
    <name type="common">Mouse</name>
    <dbReference type="NCBI Taxonomy" id="10090"/>
    <lineage>
        <taxon>Eukaryota</taxon>
        <taxon>Metazoa</taxon>
        <taxon>Chordata</taxon>
        <taxon>Craniata</taxon>
        <taxon>Vertebrata</taxon>
        <taxon>Euteleostomi</taxon>
        <taxon>Mammalia</taxon>
        <taxon>Eutheria</taxon>
        <taxon>Euarchontoglires</taxon>
        <taxon>Glires</taxon>
        <taxon>Rodentia</taxon>
        <taxon>Myomorpha</taxon>
        <taxon>Muroidea</taxon>
        <taxon>Muridae</taxon>
        <taxon>Murinae</taxon>
        <taxon>Mus</taxon>
        <taxon>Mus</taxon>
    </lineage>
</organism>
<protein>
    <recommendedName>
        <fullName evidence="6">FMR1-interacting protein NUFIP2</fullName>
    </recommendedName>
    <alternativeName>
        <fullName>82 kDa FMRP-interacting protein</fullName>
        <shortName>82-FIP</shortName>
    </alternativeName>
    <alternativeName>
        <fullName>FMRP-interacting protein 2</fullName>
    </alternativeName>
</protein>
<accession>Q5F2E7</accession>
<accession>Q3TCE2</accession>
<accession>Q3V195</accession>
<accession>Q80TF1</accession>